<comment type="function">
    <text evidence="1">Catalyzes the reversible phosphatidyl group transfer from one phosphatidylglycerol molecule to another to form cardiolipin (CL) (diphosphatidylglycerol) and glycerol.</text>
</comment>
<comment type="catalytic activity">
    <reaction evidence="1">
        <text>2 a 1,2-diacyl-sn-glycero-3-phospho-(1'-sn-glycerol) = a cardiolipin + glycerol</text>
        <dbReference type="Rhea" id="RHEA:31451"/>
        <dbReference type="ChEBI" id="CHEBI:17754"/>
        <dbReference type="ChEBI" id="CHEBI:62237"/>
        <dbReference type="ChEBI" id="CHEBI:64716"/>
    </reaction>
</comment>
<comment type="subcellular location">
    <subcellularLocation>
        <location evidence="1">Cell membrane</location>
        <topology evidence="1">Multi-pass membrane protein</topology>
    </subcellularLocation>
</comment>
<comment type="similarity">
    <text evidence="1">Belongs to the phospholipase D family. Cardiolipin synthase subfamily.</text>
</comment>
<dbReference type="EC" id="2.7.8.-" evidence="1"/>
<dbReference type="EMBL" id="AB017186">
    <property type="protein sequence ID" value="BAA74786.1"/>
    <property type="molecule type" value="Genomic_DNA"/>
</dbReference>
<dbReference type="EMBL" id="CP000246">
    <property type="protein sequence ID" value="ABG84511.1"/>
    <property type="molecule type" value="Genomic_DNA"/>
</dbReference>
<dbReference type="PIR" id="T43863">
    <property type="entry name" value="T43863"/>
</dbReference>
<dbReference type="RefSeq" id="WP_003454642.1">
    <property type="nucleotide sequence ID" value="NC_008261.1"/>
</dbReference>
<dbReference type="SMR" id="Q0TQG9"/>
<dbReference type="STRING" id="195103.CPF_1683"/>
<dbReference type="PaxDb" id="195103-CPF_1683"/>
<dbReference type="KEGG" id="cpf:CPF_1683"/>
<dbReference type="eggNOG" id="COG1502">
    <property type="taxonomic scope" value="Bacteria"/>
</dbReference>
<dbReference type="HOGENOM" id="CLU_038053_1_1_9"/>
<dbReference type="Proteomes" id="UP000001823">
    <property type="component" value="Chromosome"/>
</dbReference>
<dbReference type="GO" id="GO:0005886">
    <property type="term" value="C:plasma membrane"/>
    <property type="evidence" value="ECO:0007669"/>
    <property type="project" value="UniProtKB-SubCell"/>
</dbReference>
<dbReference type="GO" id="GO:0008808">
    <property type="term" value="F:cardiolipin synthase activity"/>
    <property type="evidence" value="ECO:0007669"/>
    <property type="project" value="InterPro"/>
</dbReference>
<dbReference type="GO" id="GO:0032049">
    <property type="term" value="P:cardiolipin biosynthetic process"/>
    <property type="evidence" value="ECO:0007669"/>
    <property type="project" value="InterPro"/>
</dbReference>
<dbReference type="CDD" id="cd09110">
    <property type="entry name" value="PLDc_CLS_1"/>
    <property type="match status" value="1"/>
</dbReference>
<dbReference type="CDD" id="cd09112">
    <property type="entry name" value="PLDc_CLS_2"/>
    <property type="match status" value="1"/>
</dbReference>
<dbReference type="Gene3D" id="3.30.870.10">
    <property type="entry name" value="Endonuclease Chain A"/>
    <property type="match status" value="2"/>
</dbReference>
<dbReference type="HAMAP" id="MF_01916">
    <property type="entry name" value="Cardiolipin_synth_Cls"/>
    <property type="match status" value="1"/>
</dbReference>
<dbReference type="InterPro" id="IPR030874">
    <property type="entry name" value="Cardiolipin_synth_Firmi"/>
</dbReference>
<dbReference type="InterPro" id="IPR022924">
    <property type="entry name" value="Cardiolipin_synthase"/>
</dbReference>
<dbReference type="InterPro" id="IPR027379">
    <property type="entry name" value="CLS_N"/>
</dbReference>
<dbReference type="InterPro" id="IPR025202">
    <property type="entry name" value="PLD-like_dom"/>
</dbReference>
<dbReference type="InterPro" id="IPR001736">
    <property type="entry name" value="PLipase_D/transphosphatidylase"/>
</dbReference>
<dbReference type="NCBIfam" id="TIGR04265">
    <property type="entry name" value="bac_cardiolipin"/>
    <property type="match status" value="1"/>
</dbReference>
<dbReference type="PANTHER" id="PTHR21248">
    <property type="entry name" value="CARDIOLIPIN SYNTHASE"/>
    <property type="match status" value="1"/>
</dbReference>
<dbReference type="PANTHER" id="PTHR21248:SF22">
    <property type="entry name" value="PHOSPHOLIPASE D"/>
    <property type="match status" value="1"/>
</dbReference>
<dbReference type="Pfam" id="PF13091">
    <property type="entry name" value="PLDc_2"/>
    <property type="match status" value="2"/>
</dbReference>
<dbReference type="Pfam" id="PF13396">
    <property type="entry name" value="PLDc_N"/>
    <property type="match status" value="1"/>
</dbReference>
<dbReference type="SMART" id="SM00155">
    <property type="entry name" value="PLDc"/>
    <property type="match status" value="2"/>
</dbReference>
<dbReference type="SUPFAM" id="SSF56024">
    <property type="entry name" value="Phospholipase D/nuclease"/>
    <property type="match status" value="2"/>
</dbReference>
<dbReference type="PROSITE" id="PS50035">
    <property type="entry name" value="PLD"/>
    <property type="match status" value="2"/>
</dbReference>
<gene>
    <name type="primary">cls</name>
    <name type="synonym">clsD</name>
    <name type="ordered locus">CPF_1683</name>
</gene>
<name>CLS_CLOP1</name>
<proteinExistence type="inferred from homology"/>
<keyword id="KW-1003">Cell membrane</keyword>
<keyword id="KW-0444">Lipid biosynthesis</keyword>
<keyword id="KW-0443">Lipid metabolism</keyword>
<keyword id="KW-0472">Membrane</keyword>
<keyword id="KW-0594">Phospholipid biosynthesis</keyword>
<keyword id="KW-1208">Phospholipid metabolism</keyword>
<keyword id="KW-0677">Repeat</keyword>
<keyword id="KW-0808">Transferase</keyword>
<keyword id="KW-0812">Transmembrane</keyword>
<keyword id="KW-1133">Transmembrane helix</keyword>
<sequence length="476" mass="55052">MHLFINMIFLINIVFIISIIFIERRNPQTTWAWILILTFLPILGFIIYILFGQNITREKNFKRKILDDKTKQKYLNSFKSHYKLDNISLKYKDLIMMNFNNDNSTYTQRNDIDLYFDANSLFEEMIDEINKAEKFIHMEFYIFKSDEIGKKILQALTKKAKEGVEVKLLVDSIGNSIHKKDIDKLKAAGGDFKIFFPGFCKYINLRINYRNHRKILIIDSKVAFLGGFNIGDEYLGKDKNIGHWRDTHTKIKGLAINDLEGRFLLDWSYANESDLDIDLKKYFINPHSTDLPKKIIGAQIVSSGPDHTEQQIKNGYFKIINSAKKNLFIQTPYFVPDEPMLEALRLAALSGVDVKIMLPGNPDHKFMGWIANSYFESLLNAGAKIYLYEKGFLHAKTIVADSSICSVGTANMDIRSFSLNFESNIFIYNEAISKSMEEQFFKDLKVCTKVTLESFEKRSIISRIGESIIRLVSPLM</sequence>
<feature type="chain" id="PRO_0000273583" description="Cardiolipin synthase">
    <location>
        <begin position="1"/>
        <end position="476"/>
    </location>
</feature>
<feature type="transmembrane region" description="Helical" evidence="1">
    <location>
        <begin position="2"/>
        <end position="22"/>
    </location>
</feature>
<feature type="transmembrane region" description="Helical" evidence="1">
    <location>
        <begin position="31"/>
        <end position="51"/>
    </location>
</feature>
<feature type="domain" description="PLD phosphodiesterase 1" evidence="1">
    <location>
        <begin position="207"/>
        <end position="234"/>
    </location>
</feature>
<feature type="domain" description="PLD phosphodiesterase 2" evidence="1">
    <location>
        <begin position="389"/>
        <end position="416"/>
    </location>
</feature>
<feature type="active site" evidence="1">
    <location>
        <position position="212"/>
    </location>
</feature>
<feature type="active site" evidence="1">
    <location>
        <position position="214"/>
    </location>
</feature>
<feature type="active site" evidence="1">
    <location>
        <position position="219"/>
    </location>
</feature>
<feature type="active site" evidence="1">
    <location>
        <position position="394"/>
    </location>
</feature>
<feature type="active site" evidence="1">
    <location>
        <position position="396"/>
    </location>
</feature>
<feature type="active site" evidence="1">
    <location>
        <position position="401"/>
    </location>
</feature>
<reference key="1">
    <citation type="journal article" date="1999" name="Microbiol. Immunol.">
        <title>A Clostridium perfringens hem gene cluster contains a cysG(B) homologue that is involved in cobalamin biosynthesis.</title>
        <authorList>
            <person name="Koyama M."/>
            <person name="Katayama S."/>
            <person name="Kaji M."/>
            <person name="Taniguchi Y."/>
            <person name="Matsushita O."/>
            <person name="Minami J."/>
            <person name="Morita S."/>
            <person name="Okabe A."/>
        </authorList>
    </citation>
    <scope>NUCLEOTIDE SEQUENCE [GENOMIC DNA]</scope>
</reference>
<reference key="2">
    <citation type="journal article" date="2006" name="Genome Res.">
        <title>Skewed genomic variability in strains of the toxigenic bacterial pathogen, Clostridium perfringens.</title>
        <authorList>
            <person name="Myers G.S.A."/>
            <person name="Rasko D.A."/>
            <person name="Cheung J.K."/>
            <person name="Ravel J."/>
            <person name="Seshadri R."/>
            <person name="DeBoy R.T."/>
            <person name="Ren Q."/>
            <person name="Varga J."/>
            <person name="Awad M.M."/>
            <person name="Brinkac L.M."/>
            <person name="Daugherty S.C."/>
            <person name="Haft D.H."/>
            <person name="Dodson R.J."/>
            <person name="Madupu R."/>
            <person name="Nelson W.C."/>
            <person name="Rosovitz M.J."/>
            <person name="Sullivan S.A."/>
            <person name="Khouri H."/>
            <person name="Dimitrov G.I."/>
            <person name="Watkins K.L."/>
            <person name="Mulligan S."/>
            <person name="Benton J."/>
            <person name="Radune D."/>
            <person name="Fisher D.J."/>
            <person name="Atkins H.S."/>
            <person name="Hiscox T."/>
            <person name="Jost B.H."/>
            <person name="Billington S.J."/>
            <person name="Songer J.G."/>
            <person name="McClane B.A."/>
            <person name="Titball R.W."/>
            <person name="Rood J.I."/>
            <person name="Melville S.B."/>
            <person name="Paulsen I.T."/>
        </authorList>
    </citation>
    <scope>NUCLEOTIDE SEQUENCE [LARGE SCALE GENOMIC DNA]</scope>
    <source>
        <strain>ATCC 13124 / DSM 756 / JCM 1290 / NCIMB 6125 / NCTC 8237 / S 107 / Type A</strain>
    </source>
</reference>
<organism>
    <name type="scientific">Clostridium perfringens (strain ATCC 13124 / DSM 756 / JCM 1290 / NCIMB 6125 / NCTC 8237 / Type A)</name>
    <dbReference type="NCBI Taxonomy" id="195103"/>
    <lineage>
        <taxon>Bacteria</taxon>
        <taxon>Bacillati</taxon>
        <taxon>Bacillota</taxon>
        <taxon>Clostridia</taxon>
        <taxon>Eubacteriales</taxon>
        <taxon>Clostridiaceae</taxon>
        <taxon>Clostridium</taxon>
    </lineage>
</organism>
<evidence type="ECO:0000255" key="1">
    <source>
        <dbReference type="HAMAP-Rule" id="MF_01916"/>
    </source>
</evidence>
<protein>
    <recommendedName>
        <fullName evidence="1">Cardiolipin synthase</fullName>
        <shortName evidence="1">CL synthase</shortName>
        <ecNumber evidence="1">2.7.8.-</ecNumber>
    </recommendedName>
</protein>
<accession>Q0TQG9</accession>
<accession>Q9ZNC6</accession>